<geneLocation type="mitochondrion"/>
<proteinExistence type="inferred from homology"/>
<dbReference type="EC" id="7.1.1.2"/>
<dbReference type="EMBL" id="Y13113">
    <property type="protein sequence ID" value="CAA73568.1"/>
    <property type="molecule type" value="Genomic_DNA"/>
</dbReference>
<dbReference type="EMBL" id="AF069428">
    <property type="protein sequence ID" value="AAD09987.1"/>
    <property type="molecule type" value="Genomic_DNA"/>
</dbReference>
<dbReference type="PIR" id="T11281">
    <property type="entry name" value="T11281"/>
</dbReference>
<dbReference type="RefSeq" id="NP_007569.1">
    <property type="nucleotide sequence ID" value="NC_001922.1"/>
</dbReference>
<dbReference type="SMR" id="O47874"/>
<dbReference type="GeneID" id="808236"/>
<dbReference type="KEGG" id="amj:808236"/>
<dbReference type="CTD" id="4537"/>
<dbReference type="OrthoDB" id="154075at2759"/>
<dbReference type="GO" id="GO:0031966">
    <property type="term" value="C:mitochondrial membrane"/>
    <property type="evidence" value="ECO:0007669"/>
    <property type="project" value="UniProtKB-SubCell"/>
</dbReference>
<dbReference type="GO" id="GO:0030964">
    <property type="term" value="C:NADH dehydrogenase complex"/>
    <property type="evidence" value="ECO:0007669"/>
    <property type="project" value="TreeGrafter"/>
</dbReference>
<dbReference type="GO" id="GO:0008137">
    <property type="term" value="F:NADH dehydrogenase (ubiquinone) activity"/>
    <property type="evidence" value="ECO:0007669"/>
    <property type="project" value="UniProtKB-EC"/>
</dbReference>
<dbReference type="FunFam" id="1.20.58.1610:FF:000004">
    <property type="entry name" value="NADH-quinone oxidoreductase subunit A"/>
    <property type="match status" value="1"/>
</dbReference>
<dbReference type="Gene3D" id="1.20.58.1610">
    <property type="entry name" value="NADH:ubiquinone/plastoquinone oxidoreductase, chain 3"/>
    <property type="match status" value="1"/>
</dbReference>
<dbReference type="InterPro" id="IPR000440">
    <property type="entry name" value="NADH_UbQ/plastoQ_OxRdtase_su3"/>
</dbReference>
<dbReference type="InterPro" id="IPR038430">
    <property type="entry name" value="NDAH_ubi_oxred_su3_sf"/>
</dbReference>
<dbReference type="PANTHER" id="PTHR11058">
    <property type="entry name" value="NADH-UBIQUINONE OXIDOREDUCTASE CHAIN 3"/>
    <property type="match status" value="1"/>
</dbReference>
<dbReference type="PANTHER" id="PTHR11058:SF9">
    <property type="entry name" value="NADH-UBIQUINONE OXIDOREDUCTASE CHAIN 3"/>
    <property type="match status" value="1"/>
</dbReference>
<dbReference type="Pfam" id="PF00507">
    <property type="entry name" value="Oxidored_q4"/>
    <property type="match status" value="1"/>
</dbReference>
<sequence>MNLFIMLTMSSITVSIVVALNLLTAKTSPDPEKLSPYECGFDPLGSARLPLSIRFFMVGILFLLFDLEIAILLPLTWAIHTLNPLKTITWAIIIFLFLFIGLAYEWLQGGLEWAE</sequence>
<feature type="chain" id="PRO_0000117703" description="NADH-ubiquinone oxidoreductase chain 3">
    <location>
        <begin position="1"/>
        <end position="115"/>
    </location>
</feature>
<feature type="transmembrane region" description="Helical" evidence="2">
    <location>
        <begin position="3"/>
        <end position="23"/>
    </location>
</feature>
<feature type="transmembrane region" description="Helical" evidence="2">
    <location>
        <begin position="55"/>
        <end position="75"/>
    </location>
</feature>
<feature type="transmembrane region" description="Helical" evidence="2">
    <location>
        <begin position="87"/>
        <end position="107"/>
    </location>
</feature>
<evidence type="ECO:0000250" key="1"/>
<evidence type="ECO:0000255" key="2"/>
<evidence type="ECO:0000305" key="3"/>
<protein>
    <recommendedName>
        <fullName>NADH-ubiquinone oxidoreductase chain 3</fullName>
        <ecNumber>7.1.1.2</ecNumber>
    </recommendedName>
    <alternativeName>
        <fullName>NADH dehydrogenase subunit 3</fullName>
    </alternativeName>
</protein>
<name>NU3M_ALLMI</name>
<comment type="function">
    <text evidence="1">Core subunit of the mitochondrial membrane respiratory chain NADH dehydrogenase (Complex I) that is believed to belong to the minimal assembly required for catalysis. Complex I functions in the transfer of electrons from NADH to the respiratory chain. The immediate electron acceptor for the enzyme is believed to be ubiquinone (By similarity).</text>
</comment>
<comment type="catalytic activity">
    <reaction>
        <text>a ubiquinone + NADH + 5 H(+)(in) = a ubiquinol + NAD(+) + 4 H(+)(out)</text>
        <dbReference type="Rhea" id="RHEA:29091"/>
        <dbReference type="Rhea" id="RHEA-COMP:9565"/>
        <dbReference type="Rhea" id="RHEA-COMP:9566"/>
        <dbReference type="ChEBI" id="CHEBI:15378"/>
        <dbReference type="ChEBI" id="CHEBI:16389"/>
        <dbReference type="ChEBI" id="CHEBI:17976"/>
        <dbReference type="ChEBI" id="CHEBI:57540"/>
        <dbReference type="ChEBI" id="CHEBI:57945"/>
        <dbReference type="EC" id="7.1.1.2"/>
    </reaction>
</comment>
<comment type="subcellular location">
    <subcellularLocation>
        <location evidence="1">Mitochondrion membrane</location>
        <topology evidence="1">Multi-pass membrane protein</topology>
    </subcellularLocation>
</comment>
<comment type="similarity">
    <text evidence="3">Belongs to the complex I subunit 3 family.</text>
</comment>
<keyword id="KW-0249">Electron transport</keyword>
<keyword id="KW-0472">Membrane</keyword>
<keyword id="KW-0496">Mitochondrion</keyword>
<keyword id="KW-0520">NAD</keyword>
<keyword id="KW-0679">Respiratory chain</keyword>
<keyword id="KW-1278">Translocase</keyword>
<keyword id="KW-0812">Transmembrane</keyword>
<keyword id="KW-1133">Transmembrane helix</keyword>
<keyword id="KW-0813">Transport</keyword>
<keyword id="KW-0830">Ubiquinone</keyword>
<accession>O47874</accession>
<gene>
    <name type="primary">MT-ND3</name>
    <name type="synonym">MTND3</name>
    <name type="synonym">NADH3</name>
    <name type="synonym">ND3</name>
</gene>
<organism>
    <name type="scientific">Alligator mississippiensis</name>
    <name type="common">American alligator</name>
    <dbReference type="NCBI Taxonomy" id="8496"/>
    <lineage>
        <taxon>Eukaryota</taxon>
        <taxon>Metazoa</taxon>
        <taxon>Chordata</taxon>
        <taxon>Craniata</taxon>
        <taxon>Vertebrata</taxon>
        <taxon>Euteleostomi</taxon>
        <taxon>Archelosauria</taxon>
        <taxon>Archosauria</taxon>
        <taxon>Crocodylia</taxon>
        <taxon>Alligatoridae</taxon>
        <taxon>Alligatorinae</taxon>
        <taxon>Alligator</taxon>
    </lineage>
</organism>
<reference key="1">
    <citation type="journal article" date="1997" name="Mol. Biol. Evol.">
        <title>The complete mitochondrial genome of Alligator mississippiensis and the separation between recent archosauria (birds and crocodiles).</title>
        <authorList>
            <person name="Janke A."/>
            <person name="Arnason U."/>
        </authorList>
    </citation>
    <scope>NUCLEOTIDE SEQUENCE [GENOMIC DNA]</scope>
    <source>
        <tissue>Liver</tissue>
    </source>
</reference>
<reference key="2">
    <citation type="submission" date="1998-06" db="EMBL/GenBank/DDBJ databases">
        <title>Primers for a PCR-based approach to complete mitochondrial genome sequencing.</title>
        <authorList>
            <person name="Sorenson M.D."/>
            <person name="Dimcheff D.E."/>
            <person name="Ast J.C."/>
            <person name="Yuri T."/>
            <person name="Mindell D.P."/>
        </authorList>
    </citation>
    <scope>NUCLEOTIDE SEQUENCE [GENOMIC DNA]</scope>
</reference>